<keyword id="KW-0067">ATP-binding</keyword>
<keyword id="KW-0143">Chaperone</keyword>
<keyword id="KW-0963">Cytoplasm</keyword>
<keyword id="KW-0547">Nucleotide-binding</keyword>
<name>HSLU_EDWI9</name>
<protein>
    <recommendedName>
        <fullName evidence="1">ATP-dependent protease ATPase subunit HslU</fullName>
    </recommendedName>
    <alternativeName>
        <fullName evidence="1">Unfoldase HslU</fullName>
    </alternativeName>
</protein>
<sequence>MSEMTPREIVSELDSYIIGQHSAKRAVAIALRNRWRRMQLGEALRHEVTPKNILMIGPTGVGKTEIARRLAKLANAPFIKVEATKFTEVGYVGKEVDSIIRDLTDSAMKMIRAQSIEKNRYRAEEMAEERILDALIPPAKNNWGQTEQTNESSPARQTFRKKLREGELDDKEIEIELAASPMGVEIMAPPGMEEMTSQLQSMFQNLGGQKTKPRKVKIKDAFKQLIEEEAAKLVNPEELKQQAIDAVEQNGIVFIDEIDKICKRGESSGPDVSREGVQRDLLPLIEGCTVNTKHGMVKTDHILFIASGAFQVSSPADLIPELQGRLPIRVELQALTTEDFERILTEPSASLTEQYQALMATEGVNISFSADGIRRIAEAAWQVNESAENIGARRLHTVMERLMEEISFDASEMHGTAIAIDADYVRNHLDELVADEDLSRFIL</sequence>
<organism>
    <name type="scientific">Edwardsiella ictaluri (strain 93-146)</name>
    <dbReference type="NCBI Taxonomy" id="634503"/>
    <lineage>
        <taxon>Bacteria</taxon>
        <taxon>Pseudomonadati</taxon>
        <taxon>Pseudomonadota</taxon>
        <taxon>Gammaproteobacteria</taxon>
        <taxon>Enterobacterales</taxon>
        <taxon>Hafniaceae</taxon>
        <taxon>Edwardsiella</taxon>
    </lineage>
</organism>
<feature type="chain" id="PRO_1000204522" description="ATP-dependent protease ATPase subunit HslU">
    <location>
        <begin position="1"/>
        <end position="443"/>
    </location>
</feature>
<feature type="binding site" evidence="1">
    <location>
        <position position="18"/>
    </location>
    <ligand>
        <name>ATP</name>
        <dbReference type="ChEBI" id="CHEBI:30616"/>
    </ligand>
</feature>
<feature type="binding site" evidence="1">
    <location>
        <begin position="60"/>
        <end position="65"/>
    </location>
    <ligand>
        <name>ATP</name>
        <dbReference type="ChEBI" id="CHEBI:30616"/>
    </ligand>
</feature>
<feature type="binding site" evidence="1">
    <location>
        <position position="256"/>
    </location>
    <ligand>
        <name>ATP</name>
        <dbReference type="ChEBI" id="CHEBI:30616"/>
    </ligand>
</feature>
<feature type="binding site" evidence="1">
    <location>
        <position position="321"/>
    </location>
    <ligand>
        <name>ATP</name>
        <dbReference type="ChEBI" id="CHEBI:30616"/>
    </ligand>
</feature>
<feature type="binding site" evidence="1">
    <location>
        <position position="393"/>
    </location>
    <ligand>
        <name>ATP</name>
        <dbReference type="ChEBI" id="CHEBI:30616"/>
    </ligand>
</feature>
<accession>C5BB81</accession>
<gene>
    <name evidence="1" type="primary">hslU</name>
    <name type="ordered locus">NT01EI_3798</name>
</gene>
<reference key="1">
    <citation type="submission" date="2009-03" db="EMBL/GenBank/DDBJ databases">
        <title>Complete genome sequence of Edwardsiella ictaluri 93-146.</title>
        <authorList>
            <person name="Williams M.L."/>
            <person name="Gillaspy A.F."/>
            <person name="Dyer D.W."/>
            <person name="Thune R.L."/>
            <person name="Waldbieser G.C."/>
            <person name="Schuster S.C."/>
            <person name="Gipson J."/>
            <person name="Zaitshik J."/>
            <person name="Landry C."/>
            <person name="Lawrence M.L."/>
        </authorList>
    </citation>
    <scope>NUCLEOTIDE SEQUENCE [LARGE SCALE GENOMIC DNA]</scope>
    <source>
        <strain>93-146</strain>
    </source>
</reference>
<evidence type="ECO:0000255" key="1">
    <source>
        <dbReference type="HAMAP-Rule" id="MF_00249"/>
    </source>
</evidence>
<dbReference type="EMBL" id="CP001600">
    <property type="protein sequence ID" value="ACR70923.1"/>
    <property type="molecule type" value="Genomic_DNA"/>
</dbReference>
<dbReference type="RefSeq" id="WP_015872957.1">
    <property type="nucleotide sequence ID" value="NZ_CP169062.1"/>
</dbReference>
<dbReference type="SMR" id="C5BB81"/>
<dbReference type="STRING" id="67780.B6E78_10565"/>
<dbReference type="GeneID" id="69540623"/>
<dbReference type="KEGG" id="eic:NT01EI_3798"/>
<dbReference type="PATRIC" id="fig|634503.3.peg.3392"/>
<dbReference type="HOGENOM" id="CLU_033123_0_0_6"/>
<dbReference type="OrthoDB" id="9804062at2"/>
<dbReference type="Proteomes" id="UP000001485">
    <property type="component" value="Chromosome"/>
</dbReference>
<dbReference type="GO" id="GO:0009376">
    <property type="term" value="C:HslUV protease complex"/>
    <property type="evidence" value="ECO:0007669"/>
    <property type="project" value="UniProtKB-UniRule"/>
</dbReference>
<dbReference type="GO" id="GO:0005524">
    <property type="term" value="F:ATP binding"/>
    <property type="evidence" value="ECO:0007669"/>
    <property type="project" value="UniProtKB-UniRule"/>
</dbReference>
<dbReference type="GO" id="GO:0016887">
    <property type="term" value="F:ATP hydrolysis activity"/>
    <property type="evidence" value="ECO:0007669"/>
    <property type="project" value="InterPro"/>
</dbReference>
<dbReference type="GO" id="GO:0008233">
    <property type="term" value="F:peptidase activity"/>
    <property type="evidence" value="ECO:0007669"/>
    <property type="project" value="InterPro"/>
</dbReference>
<dbReference type="GO" id="GO:0036402">
    <property type="term" value="F:proteasome-activating activity"/>
    <property type="evidence" value="ECO:0007669"/>
    <property type="project" value="UniProtKB-UniRule"/>
</dbReference>
<dbReference type="GO" id="GO:0043335">
    <property type="term" value="P:protein unfolding"/>
    <property type="evidence" value="ECO:0007669"/>
    <property type="project" value="UniProtKB-UniRule"/>
</dbReference>
<dbReference type="GO" id="GO:0051603">
    <property type="term" value="P:proteolysis involved in protein catabolic process"/>
    <property type="evidence" value="ECO:0007669"/>
    <property type="project" value="TreeGrafter"/>
</dbReference>
<dbReference type="CDD" id="cd19498">
    <property type="entry name" value="RecA-like_HslU"/>
    <property type="match status" value="1"/>
</dbReference>
<dbReference type="FunFam" id="1.10.8.10:FF:000028">
    <property type="entry name" value="ATP-dependent protease ATPase subunit HslU"/>
    <property type="match status" value="2"/>
</dbReference>
<dbReference type="FunFam" id="1.10.8.60:FF:000027">
    <property type="entry name" value="ATP-dependent protease ATPase subunit HslU"/>
    <property type="match status" value="1"/>
</dbReference>
<dbReference type="FunFam" id="3.40.50.300:FF:000213">
    <property type="entry name" value="ATP-dependent protease ATPase subunit HslU"/>
    <property type="match status" value="1"/>
</dbReference>
<dbReference type="FunFam" id="3.40.50.300:FF:000220">
    <property type="entry name" value="ATP-dependent protease ATPase subunit HslU"/>
    <property type="match status" value="1"/>
</dbReference>
<dbReference type="Gene3D" id="1.10.8.60">
    <property type="match status" value="1"/>
</dbReference>
<dbReference type="Gene3D" id="1.10.8.10">
    <property type="entry name" value="DNA helicase RuvA subunit, C-terminal domain"/>
    <property type="match status" value="2"/>
</dbReference>
<dbReference type="Gene3D" id="3.40.50.300">
    <property type="entry name" value="P-loop containing nucleotide triphosphate hydrolases"/>
    <property type="match status" value="1"/>
</dbReference>
<dbReference type="HAMAP" id="MF_00249">
    <property type="entry name" value="HslU"/>
    <property type="match status" value="1"/>
</dbReference>
<dbReference type="InterPro" id="IPR003593">
    <property type="entry name" value="AAA+_ATPase"/>
</dbReference>
<dbReference type="InterPro" id="IPR050052">
    <property type="entry name" value="ATP-dep_Clp_protease_ClpX"/>
</dbReference>
<dbReference type="InterPro" id="IPR003959">
    <property type="entry name" value="ATPase_AAA_core"/>
</dbReference>
<dbReference type="InterPro" id="IPR019489">
    <property type="entry name" value="Clp_ATPase_C"/>
</dbReference>
<dbReference type="InterPro" id="IPR004491">
    <property type="entry name" value="HslU"/>
</dbReference>
<dbReference type="InterPro" id="IPR027417">
    <property type="entry name" value="P-loop_NTPase"/>
</dbReference>
<dbReference type="NCBIfam" id="TIGR00390">
    <property type="entry name" value="hslU"/>
    <property type="match status" value="1"/>
</dbReference>
<dbReference type="NCBIfam" id="NF003544">
    <property type="entry name" value="PRK05201.1"/>
    <property type="match status" value="1"/>
</dbReference>
<dbReference type="PANTHER" id="PTHR48102">
    <property type="entry name" value="ATP-DEPENDENT CLP PROTEASE ATP-BINDING SUBUNIT CLPX-LIKE, MITOCHONDRIAL-RELATED"/>
    <property type="match status" value="1"/>
</dbReference>
<dbReference type="PANTHER" id="PTHR48102:SF3">
    <property type="entry name" value="ATP-DEPENDENT PROTEASE ATPASE SUBUNIT HSLU"/>
    <property type="match status" value="1"/>
</dbReference>
<dbReference type="Pfam" id="PF00004">
    <property type="entry name" value="AAA"/>
    <property type="match status" value="1"/>
</dbReference>
<dbReference type="Pfam" id="PF07724">
    <property type="entry name" value="AAA_2"/>
    <property type="match status" value="1"/>
</dbReference>
<dbReference type="SMART" id="SM00382">
    <property type="entry name" value="AAA"/>
    <property type="match status" value="1"/>
</dbReference>
<dbReference type="SMART" id="SM01086">
    <property type="entry name" value="ClpB_D2-small"/>
    <property type="match status" value="1"/>
</dbReference>
<dbReference type="SUPFAM" id="SSF52540">
    <property type="entry name" value="P-loop containing nucleoside triphosphate hydrolases"/>
    <property type="match status" value="1"/>
</dbReference>
<comment type="function">
    <text evidence="1">ATPase subunit of a proteasome-like degradation complex; this subunit has chaperone activity. The binding of ATP and its subsequent hydrolysis by HslU are essential for unfolding of protein substrates subsequently hydrolyzed by HslV. HslU recognizes the N-terminal part of its protein substrates and unfolds these before they are guided to HslV for hydrolysis.</text>
</comment>
<comment type="subunit">
    <text evidence="1">A double ring-shaped homohexamer of HslV is capped on each side by a ring-shaped HslU homohexamer. The assembly of the HslU/HslV complex is dependent on binding of ATP.</text>
</comment>
<comment type="subcellular location">
    <subcellularLocation>
        <location evidence="1">Cytoplasm</location>
    </subcellularLocation>
</comment>
<comment type="similarity">
    <text evidence="1">Belongs to the ClpX chaperone family. HslU subfamily.</text>
</comment>
<proteinExistence type="inferred from homology"/>